<comment type="function">
    <text evidence="1">Carrier of the growing fatty acid chain in fatty acid biosynthesis.</text>
</comment>
<comment type="pathway">
    <text evidence="1">Lipid metabolism; fatty acid biosynthesis.</text>
</comment>
<comment type="subcellular location">
    <subcellularLocation>
        <location evidence="1">Cytoplasm</location>
    </subcellularLocation>
</comment>
<comment type="PTM">
    <text evidence="1">4'-phosphopantetheine is transferred from CoA to a specific serine of apo-ACP by AcpS. This modification is essential for activity because fatty acids are bound in thioester linkage to the sulfhydryl of the prosthetic group.</text>
</comment>
<comment type="similarity">
    <text evidence="1">Belongs to the acyl carrier protein (ACP) family.</text>
</comment>
<keyword id="KW-0963">Cytoplasm</keyword>
<keyword id="KW-0275">Fatty acid biosynthesis</keyword>
<keyword id="KW-0276">Fatty acid metabolism</keyword>
<keyword id="KW-0444">Lipid biosynthesis</keyword>
<keyword id="KW-0443">Lipid metabolism</keyword>
<keyword id="KW-0596">Phosphopantetheine</keyword>
<keyword id="KW-0597">Phosphoprotein</keyword>
<organism>
    <name type="scientific">Hydrogenovibrio crunogenus (strain DSM 25203 / XCL-2)</name>
    <name type="common">Thiomicrospira crunogena</name>
    <dbReference type="NCBI Taxonomy" id="317025"/>
    <lineage>
        <taxon>Bacteria</taxon>
        <taxon>Pseudomonadati</taxon>
        <taxon>Pseudomonadota</taxon>
        <taxon>Gammaproteobacteria</taxon>
        <taxon>Thiotrichales</taxon>
        <taxon>Piscirickettsiaceae</taxon>
        <taxon>Hydrogenovibrio</taxon>
    </lineage>
</organism>
<name>ACP_HYDCU</name>
<dbReference type="EMBL" id="CP000109">
    <property type="protein sequence ID" value="ABB41309.1"/>
    <property type="molecule type" value="Genomic_DNA"/>
</dbReference>
<dbReference type="SMR" id="Q31HR4"/>
<dbReference type="STRING" id="317025.Tcr_0713"/>
<dbReference type="KEGG" id="tcx:Tcr_0713"/>
<dbReference type="eggNOG" id="COG0236">
    <property type="taxonomic scope" value="Bacteria"/>
</dbReference>
<dbReference type="HOGENOM" id="CLU_108696_5_1_6"/>
<dbReference type="OrthoDB" id="9804551at2"/>
<dbReference type="UniPathway" id="UPA00094"/>
<dbReference type="GO" id="GO:0005829">
    <property type="term" value="C:cytosol"/>
    <property type="evidence" value="ECO:0007669"/>
    <property type="project" value="TreeGrafter"/>
</dbReference>
<dbReference type="GO" id="GO:0016020">
    <property type="term" value="C:membrane"/>
    <property type="evidence" value="ECO:0007669"/>
    <property type="project" value="GOC"/>
</dbReference>
<dbReference type="GO" id="GO:0000035">
    <property type="term" value="F:acyl binding"/>
    <property type="evidence" value="ECO:0007669"/>
    <property type="project" value="TreeGrafter"/>
</dbReference>
<dbReference type="GO" id="GO:0000036">
    <property type="term" value="F:acyl carrier activity"/>
    <property type="evidence" value="ECO:0007669"/>
    <property type="project" value="UniProtKB-UniRule"/>
</dbReference>
<dbReference type="GO" id="GO:0009245">
    <property type="term" value="P:lipid A biosynthetic process"/>
    <property type="evidence" value="ECO:0007669"/>
    <property type="project" value="TreeGrafter"/>
</dbReference>
<dbReference type="FunFam" id="1.10.1200.10:FF:000001">
    <property type="entry name" value="Acyl carrier protein"/>
    <property type="match status" value="1"/>
</dbReference>
<dbReference type="Gene3D" id="1.10.1200.10">
    <property type="entry name" value="ACP-like"/>
    <property type="match status" value="1"/>
</dbReference>
<dbReference type="HAMAP" id="MF_01217">
    <property type="entry name" value="Acyl_carrier"/>
    <property type="match status" value="1"/>
</dbReference>
<dbReference type="InterPro" id="IPR003231">
    <property type="entry name" value="ACP"/>
</dbReference>
<dbReference type="InterPro" id="IPR036736">
    <property type="entry name" value="ACP-like_sf"/>
</dbReference>
<dbReference type="InterPro" id="IPR009081">
    <property type="entry name" value="PP-bd_ACP"/>
</dbReference>
<dbReference type="InterPro" id="IPR006162">
    <property type="entry name" value="Ppantetheine_attach_site"/>
</dbReference>
<dbReference type="NCBIfam" id="TIGR00517">
    <property type="entry name" value="acyl_carrier"/>
    <property type="match status" value="1"/>
</dbReference>
<dbReference type="NCBIfam" id="NF002148">
    <property type="entry name" value="PRK00982.1-2"/>
    <property type="match status" value="1"/>
</dbReference>
<dbReference type="NCBIfam" id="NF002149">
    <property type="entry name" value="PRK00982.1-3"/>
    <property type="match status" value="1"/>
</dbReference>
<dbReference type="NCBIfam" id="NF002150">
    <property type="entry name" value="PRK00982.1-4"/>
    <property type="match status" value="1"/>
</dbReference>
<dbReference type="NCBIfam" id="NF002151">
    <property type="entry name" value="PRK00982.1-5"/>
    <property type="match status" value="1"/>
</dbReference>
<dbReference type="PANTHER" id="PTHR20863">
    <property type="entry name" value="ACYL CARRIER PROTEIN"/>
    <property type="match status" value="1"/>
</dbReference>
<dbReference type="PANTHER" id="PTHR20863:SF76">
    <property type="entry name" value="CARRIER DOMAIN-CONTAINING PROTEIN"/>
    <property type="match status" value="1"/>
</dbReference>
<dbReference type="Pfam" id="PF00550">
    <property type="entry name" value="PP-binding"/>
    <property type="match status" value="1"/>
</dbReference>
<dbReference type="SUPFAM" id="SSF47336">
    <property type="entry name" value="ACP-like"/>
    <property type="match status" value="1"/>
</dbReference>
<dbReference type="PROSITE" id="PS50075">
    <property type="entry name" value="CARRIER"/>
    <property type="match status" value="1"/>
</dbReference>
<dbReference type="PROSITE" id="PS00012">
    <property type="entry name" value="PHOSPHOPANTETHEINE"/>
    <property type="match status" value="1"/>
</dbReference>
<gene>
    <name evidence="1" type="primary">acpP</name>
    <name type="ordered locus">Tcr_0713</name>
</gene>
<feature type="chain" id="PRO_1000066712" description="Acyl carrier protein">
    <location>
        <begin position="1"/>
        <end position="78"/>
    </location>
</feature>
<feature type="domain" description="Carrier" evidence="2">
    <location>
        <begin position="2"/>
        <end position="77"/>
    </location>
</feature>
<feature type="modified residue" description="O-(pantetheine 4'-phosphoryl)serine" evidence="2">
    <location>
        <position position="37"/>
    </location>
</feature>
<proteinExistence type="inferred from homology"/>
<reference key="1">
    <citation type="journal article" date="2006" name="PLoS Biol.">
        <title>The genome of deep-sea vent chemolithoautotroph Thiomicrospira crunogena XCL-2.</title>
        <authorList>
            <person name="Scott K.M."/>
            <person name="Sievert S.M."/>
            <person name="Abril F.N."/>
            <person name="Ball L.A."/>
            <person name="Barrett C.J."/>
            <person name="Blake R.A."/>
            <person name="Boller A.J."/>
            <person name="Chain P.S.G."/>
            <person name="Clark J.A."/>
            <person name="Davis C.R."/>
            <person name="Detter C."/>
            <person name="Do K.F."/>
            <person name="Dobrinski K.P."/>
            <person name="Faza B.I."/>
            <person name="Fitzpatrick K.A."/>
            <person name="Freyermuth S.K."/>
            <person name="Harmer T.L."/>
            <person name="Hauser L.J."/>
            <person name="Huegler M."/>
            <person name="Kerfeld C.A."/>
            <person name="Klotz M.G."/>
            <person name="Kong W.W."/>
            <person name="Land M."/>
            <person name="Lapidus A."/>
            <person name="Larimer F.W."/>
            <person name="Longo D.L."/>
            <person name="Lucas S."/>
            <person name="Malfatti S.A."/>
            <person name="Massey S.E."/>
            <person name="Martin D.D."/>
            <person name="McCuddin Z."/>
            <person name="Meyer F."/>
            <person name="Moore J.L."/>
            <person name="Ocampo L.H. Jr."/>
            <person name="Paul J.H."/>
            <person name="Paulsen I.T."/>
            <person name="Reep D.K."/>
            <person name="Ren Q."/>
            <person name="Ross R.L."/>
            <person name="Sato P.Y."/>
            <person name="Thomas P."/>
            <person name="Tinkham L.E."/>
            <person name="Zeruth G.T."/>
        </authorList>
    </citation>
    <scope>NUCLEOTIDE SEQUENCE [LARGE SCALE GENOMIC DNA]</scope>
    <source>
        <strain>DSM 25203 / XCL-2</strain>
    </source>
</reference>
<accession>Q31HR4</accession>
<protein>
    <recommendedName>
        <fullName evidence="1">Acyl carrier protein</fullName>
        <shortName evidence="1">ACP</shortName>
    </recommendedName>
</protein>
<evidence type="ECO:0000255" key="1">
    <source>
        <dbReference type="HAMAP-Rule" id="MF_01217"/>
    </source>
</evidence>
<evidence type="ECO:0000255" key="2">
    <source>
        <dbReference type="PROSITE-ProRule" id="PRU00258"/>
    </source>
</evidence>
<sequence>MSSIEERVKKIVVEQLGVEEDQVTADASFIDDLGADSLDTVELVMALEEEFDCEIPDEEAEKISTLAQATSYVEANLD</sequence>